<sequence>MSYANYRYMKARAKRWRPENLDGIQTSDEHLINLFAKILSKHVPEIGKFDPNKDVESYISKLDQHFTEYPSLFPNEHTKRQYTLNHLEELEQQFAERMFSENGSLTWQELLRQTGKVQGSNKGDRLTKTFEGFRNQLDKVQFIRKLMSKANVDDFHTRLFILWMLPYSLRKLKERNYWKSEISEIYDFLEDKRTASYGKTHKRFQLQNKNLGKESLSKKNNTTNSRNLRKTNVSRIEYSSNKFLNHTRKRYEMVLQAELPDFKCSIPCLIDTGAQANIITEETVRAHKLPTRPWSKSVIYGGVYPNKINRKTIKLNISLNGISIKTEFLVVKKFSHPAAISFTTLYDNNIEISSSKHTLSQMNKVSNIVKEPELPDIYKEFKDITAETNTEKLPKPIKGLEFEVELTQENYRLPIRNYPLPPGKMQAMNDEINQGLKSGIIRESKAINACPVMFVPKKEGTLRMVVDYKPLNKYVKPNIYPLPLIEQLLAKIQGSTIFTKLDLKSAYHLIRVRKGDEHKLAFRCPRGVFEYLVMPYGISTAPAHFQYFINTILGEAKESHVVCYMDDILIHSKSESEHVKHVKDVLQKLKNANLIINQAKCEFHQSQVKFIGYHISEKGFTPCQENIDKVLQWKQPKNRKELRQFLGSVNYLRKFIPKTSQLTHPLNNLLKKDVRWKWTPTQTQAIENIKQCLVSPPVLRHFDFSKKILLETDASDVAVGAVLSQKHDDDKYYPVGYYSAKMSKAQLNYSVSDKEMLAIIKSLKHWRHYLESTIEPFKILTDHRNLIGRITNESEPENKRLARWQLFLQDFNFEINYRPGSANHIADALSRIVDETEPIPKDSEDNSINFVNQISITDDFKNQVVTEYTNDTKLLNLLNNEDKRVEENIQLKDGLLINSKDQILLPNDTQLTRTIIKKYHEEGKLIHPGIELLTNIILRRFTWKGIRKQIQEYVQNCHTCQINKSRNHKPYGPLQPIPPSERPWESLSMDFITALPESSGYNALFVVVDRFSKMAILVPCTKSITAEQTARMFDQRVIAYFGNPKEIIADNDHIFTSQTWKDFAHKYNFVMKFSLPYRPQTDGQTERTNQTVEKLLRCVCSTHPNTWVDHISLVQQSYNNAIHSATQMTPFEIVHRYSPALSPLELPSFSDKTDENSQETIQVFQTVKEHLNTNNIKMKKYFDMKIQEIEEFQPGDLVMVKRTKTGFLHKSNKLAPSFAGPFYVLQKSGPNNYELDLPDSIKHMFSSTFHVSHLEKYRHNSELNYATIDESDIGTILHILEHKNREQVLYLNVKYISNLNPSTIMSGWTTLATALQADKAIVNDYIKNNNLNI</sequence>
<gene>
    <name type="primary">Tf2-9</name>
    <name type="ORF">SPBC9B6.02c</name>
</gene>
<protein>
    <recommendedName>
        <fullName>Transposon Tf2-9 polyprotein</fullName>
    </recommendedName>
    <alternativeName>
        <fullName>Retrotransposable element Tf2 155 kDa protein</fullName>
    </alternativeName>
</protein>
<evidence type="ECO:0000250" key="1"/>
<evidence type="ECO:0000255" key="2">
    <source>
        <dbReference type="PROSITE-ProRule" id="PRU00405"/>
    </source>
</evidence>
<evidence type="ECO:0000255" key="3">
    <source>
        <dbReference type="PROSITE-ProRule" id="PRU00457"/>
    </source>
</evidence>
<evidence type="ECO:0000255" key="4">
    <source>
        <dbReference type="PROSITE-ProRule" id="PRU10094"/>
    </source>
</evidence>
<evidence type="ECO:0000256" key="5">
    <source>
        <dbReference type="SAM" id="MobiDB-lite"/>
    </source>
</evidence>
<name>TF29_SCHPO</name>
<accession>P0CT40</accession>
<accession>Q05654</accession>
<accession>Q96TJ6</accession>
<feature type="chain" id="PRO_0000424429" description="Transposon Tf2-9 polyprotein">
    <location>
        <begin position="1"/>
        <end position="1333"/>
    </location>
</feature>
<feature type="domain" description="Peptidase A2">
    <location>
        <begin position="266"/>
        <end position="342"/>
    </location>
</feature>
<feature type="domain" description="Reverse transcriptase" evidence="2">
    <location>
        <begin position="436"/>
        <end position="615"/>
    </location>
</feature>
<feature type="domain" description="Integrase catalytic" evidence="3">
    <location>
        <begin position="979"/>
        <end position="1138"/>
    </location>
</feature>
<feature type="region of interest" description="Disordered" evidence="5">
    <location>
        <begin position="209"/>
        <end position="229"/>
    </location>
</feature>
<feature type="compositionally biased region" description="Polar residues" evidence="5">
    <location>
        <begin position="218"/>
        <end position="229"/>
    </location>
</feature>
<feature type="active site" description="For protease activity" evidence="4">
    <location>
        <position position="271"/>
    </location>
</feature>
<feature type="binding site" evidence="1">
    <location>
        <position position="502"/>
    </location>
    <ligand>
        <name>Mg(2+)</name>
        <dbReference type="ChEBI" id="CHEBI:18420"/>
        <label>1</label>
        <note>catalytic; for reverse transcriptase activity</note>
    </ligand>
</feature>
<feature type="binding site" evidence="1">
    <location>
        <position position="566"/>
    </location>
    <ligand>
        <name>Mg(2+)</name>
        <dbReference type="ChEBI" id="CHEBI:18420"/>
        <label>1</label>
        <note>catalytic; for reverse transcriptase activity</note>
    </ligand>
</feature>
<feature type="binding site" evidence="1">
    <location>
        <position position="567"/>
    </location>
    <ligand>
        <name>Mg(2+)</name>
        <dbReference type="ChEBI" id="CHEBI:18420"/>
        <label>1</label>
        <note>catalytic; for reverse transcriptase activity</note>
    </ligand>
</feature>
<feature type="binding site" evidence="1">
    <location>
        <position position="990"/>
    </location>
    <ligand>
        <name>Mg(2+)</name>
        <dbReference type="ChEBI" id="CHEBI:18420"/>
        <label>2</label>
        <note>catalytic; for integrase activity</note>
    </ligand>
</feature>
<feature type="binding site" evidence="1">
    <location>
        <position position="1050"/>
    </location>
    <ligand>
        <name>Mg(2+)</name>
        <dbReference type="ChEBI" id="CHEBI:18420"/>
        <label>2</label>
        <note>catalytic; for integrase activity</note>
    </ligand>
</feature>
<reference key="1">
    <citation type="journal article" date="2002" name="Nature">
        <title>The genome sequence of Schizosaccharomyces pombe.</title>
        <authorList>
            <person name="Wood V."/>
            <person name="Gwilliam R."/>
            <person name="Rajandream M.A."/>
            <person name="Lyne M.H."/>
            <person name="Lyne R."/>
            <person name="Stewart A."/>
            <person name="Sgouros J.G."/>
            <person name="Peat N."/>
            <person name="Hayles J."/>
            <person name="Baker S.G."/>
            <person name="Basham D."/>
            <person name="Bowman S."/>
            <person name="Brooks K."/>
            <person name="Brown D."/>
            <person name="Brown S."/>
            <person name="Chillingworth T."/>
            <person name="Churcher C.M."/>
            <person name="Collins M."/>
            <person name="Connor R."/>
            <person name="Cronin A."/>
            <person name="Davis P."/>
            <person name="Feltwell T."/>
            <person name="Fraser A."/>
            <person name="Gentles S."/>
            <person name="Goble A."/>
            <person name="Hamlin N."/>
            <person name="Harris D.E."/>
            <person name="Hidalgo J."/>
            <person name="Hodgson G."/>
            <person name="Holroyd S."/>
            <person name="Hornsby T."/>
            <person name="Howarth S."/>
            <person name="Huckle E.J."/>
            <person name="Hunt S."/>
            <person name="Jagels K."/>
            <person name="James K.D."/>
            <person name="Jones L."/>
            <person name="Jones M."/>
            <person name="Leather S."/>
            <person name="McDonald S."/>
            <person name="McLean J."/>
            <person name="Mooney P."/>
            <person name="Moule S."/>
            <person name="Mungall K.L."/>
            <person name="Murphy L.D."/>
            <person name="Niblett D."/>
            <person name="Odell C."/>
            <person name="Oliver K."/>
            <person name="O'Neil S."/>
            <person name="Pearson D."/>
            <person name="Quail M.A."/>
            <person name="Rabbinowitsch E."/>
            <person name="Rutherford K.M."/>
            <person name="Rutter S."/>
            <person name="Saunders D."/>
            <person name="Seeger K."/>
            <person name="Sharp S."/>
            <person name="Skelton J."/>
            <person name="Simmonds M.N."/>
            <person name="Squares R."/>
            <person name="Squares S."/>
            <person name="Stevens K."/>
            <person name="Taylor K."/>
            <person name="Taylor R.G."/>
            <person name="Tivey A."/>
            <person name="Walsh S.V."/>
            <person name="Warren T."/>
            <person name="Whitehead S."/>
            <person name="Woodward J.R."/>
            <person name="Volckaert G."/>
            <person name="Aert R."/>
            <person name="Robben J."/>
            <person name="Grymonprez B."/>
            <person name="Weltjens I."/>
            <person name="Vanstreels E."/>
            <person name="Rieger M."/>
            <person name="Schaefer M."/>
            <person name="Mueller-Auer S."/>
            <person name="Gabel C."/>
            <person name="Fuchs M."/>
            <person name="Duesterhoeft A."/>
            <person name="Fritzc C."/>
            <person name="Holzer E."/>
            <person name="Moestl D."/>
            <person name="Hilbert H."/>
            <person name="Borzym K."/>
            <person name="Langer I."/>
            <person name="Beck A."/>
            <person name="Lehrach H."/>
            <person name="Reinhardt R."/>
            <person name="Pohl T.M."/>
            <person name="Eger P."/>
            <person name="Zimmermann W."/>
            <person name="Wedler H."/>
            <person name="Wambutt R."/>
            <person name="Purnelle B."/>
            <person name="Goffeau A."/>
            <person name="Cadieu E."/>
            <person name="Dreano S."/>
            <person name="Gloux S."/>
            <person name="Lelaure V."/>
            <person name="Mottier S."/>
            <person name="Galibert F."/>
            <person name="Aves S.J."/>
            <person name="Xiang Z."/>
            <person name="Hunt C."/>
            <person name="Moore K."/>
            <person name="Hurst S.M."/>
            <person name="Lucas M."/>
            <person name="Rochet M."/>
            <person name="Gaillardin C."/>
            <person name="Tallada V.A."/>
            <person name="Garzon A."/>
            <person name="Thode G."/>
            <person name="Daga R.R."/>
            <person name="Cruzado L."/>
            <person name="Jimenez J."/>
            <person name="Sanchez M."/>
            <person name="del Rey F."/>
            <person name="Benito J."/>
            <person name="Dominguez A."/>
            <person name="Revuelta J.L."/>
            <person name="Moreno S."/>
            <person name="Armstrong J."/>
            <person name="Forsburg S.L."/>
            <person name="Cerutti L."/>
            <person name="Lowe T."/>
            <person name="McCombie W.R."/>
            <person name="Paulsen I."/>
            <person name="Potashkin J."/>
            <person name="Shpakovski G.V."/>
            <person name="Ussery D."/>
            <person name="Barrell B.G."/>
            <person name="Nurse P."/>
        </authorList>
    </citation>
    <scope>NUCLEOTIDE SEQUENCE [LARGE SCALE GENOMIC DNA]</scope>
    <source>
        <strain>972 / ATCC 24843</strain>
    </source>
</reference>
<reference key="2">
    <citation type="journal article" date="2003" name="Genome Res.">
        <title>Retrotransposons and their recognition of pol II promoters: a comprehensive survey of the transposable elements from the complete genome sequence of Schizosaccharomyces pombe.</title>
        <authorList>
            <person name="Bowen N.J."/>
            <person name="Jordan I.K."/>
            <person name="Epstein J.A."/>
            <person name="Wood V."/>
            <person name="Levin H.L."/>
        </authorList>
    </citation>
    <scope>NOMENCLATURE</scope>
</reference>
<comment type="PTM">
    <text evidence="1">Processing of the polyproteins proceeds by an ordered pathway, called maturation. It involves the initial cleavage of a 27 kDa capsid protein (CA) from the N-terminus of the polyprotein, followed by the cleavage of a 56 kDa integrase (IN) from the C-terminus. This leaves a 72 kDa protease-reverse transcriptase fusion protein (PR-RT), which does not seem to be processed further (By similarity).</text>
</comment>
<comment type="miscellaneous">
    <text>Retrotransposons are mobile genetic entities that are able to replicate via an RNA intermediate and a reverse transcription step. In contrast to retroviruses, retrotransposons are non-infectious, lack an envelope and remain intracellular. Tf2 retrotransposons belong to the gypsy-like elements (metaviridae).</text>
</comment>
<dbReference type="EMBL" id="CU329671">
    <property type="protein sequence ID" value="CAB42363.1"/>
    <property type="molecule type" value="Genomic_DNA"/>
</dbReference>
<dbReference type="PIR" id="T38401">
    <property type="entry name" value="T38401"/>
</dbReference>
<dbReference type="RefSeq" id="NP_001018800.2">
    <property type="nucleotide sequence ID" value="NM_001021644.3"/>
</dbReference>
<dbReference type="SMR" id="P0CT40"/>
<dbReference type="FunCoup" id="P0CT40">
    <property type="interactions" value="2"/>
</dbReference>
<dbReference type="STRING" id="284812.P0CT40"/>
<dbReference type="MEROPS" id="A02.051"/>
<dbReference type="EnsemblFungi" id="SPAC167.08.1">
    <property type="protein sequence ID" value="SPAC167.08.1:pep"/>
    <property type="gene ID" value="SPAC167.08"/>
</dbReference>
<dbReference type="EnsemblFungi" id="SPAC26A3.13c.1">
    <property type="protein sequence ID" value="SPAC26A3.13c.1:pep"/>
    <property type="gene ID" value="SPAC26A3.13c"/>
</dbReference>
<dbReference type="EnsemblFungi" id="SPAC9.04.1">
    <property type="protein sequence ID" value="SPAC9.04.1:pep"/>
    <property type="gene ID" value="SPAC9.04"/>
</dbReference>
<dbReference type="EnsemblFungi" id="SPBC9B6.02c.1">
    <property type="protein sequence ID" value="SPBC9B6.02c.1:pep"/>
    <property type="gene ID" value="SPBC9B6.02c"/>
</dbReference>
<dbReference type="GeneID" id="3361218"/>
<dbReference type="KEGG" id="spo:2542672"/>
<dbReference type="KEGG" id="spo:2542797"/>
<dbReference type="KEGG" id="spo:2543673"/>
<dbReference type="KEGG" id="spo:3361218"/>
<dbReference type="PomBase" id="SPBC9B6.02c">
    <property type="gene designation" value="Tf2-9"/>
</dbReference>
<dbReference type="VEuPathDB" id="FungiDB:SPAC167.08"/>
<dbReference type="VEuPathDB" id="FungiDB:SPAC26A3.13c"/>
<dbReference type="VEuPathDB" id="FungiDB:SPAC9.04"/>
<dbReference type="VEuPathDB" id="FungiDB:SPBC9B6.02c"/>
<dbReference type="HOGENOM" id="CLU_000384_4_0_1"/>
<dbReference type="InParanoid" id="P0CT40"/>
<dbReference type="PhylomeDB" id="P0CT40"/>
<dbReference type="PRO" id="PR:P0CT40"/>
<dbReference type="Proteomes" id="UP000002485">
    <property type="component" value="Chromosome II"/>
</dbReference>
<dbReference type="GO" id="GO:0005737">
    <property type="term" value="C:cytoplasm"/>
    <property type="evidence" value="ECO:0007005"/>
    <property type="project" value="PomBase"/>
</dbReference>
<dbReference type="GO" id="GO:0005634">
    <property type="term" value="C:nucleus"/>
    <property type="evidence" value="ECO:0007669"/>
    <property type="project" value="UniProtKB-ARBA"/>
</dbReference>
<dbReference type="GO" id="GO:0004190">
    <property type="term" value="F:aspartic-type endopeptidase activity"/>
    <property type="evidence" value="ECO:0007669"/>
    <property type="project" value="UniProtKB-KW"/>
</dbReference>
<dbReference type="GO" id="GO:0003677">
    <property type="term" value="F:DNA binding"/>
    <property type="evidence" value="ECO:0007669"/>
    <property type="project" value="UniProtKB-KW"/>
</dbReference>
<dbReference type="GO" id="GO:0003887">
    <property type="term" value="F:DNA-directed DNA polymerase activity"/>
    <property type="evidence" value="ECO:0007669"/>
    <property type="project" value="UniProtKB-KW"/>
</dbReference>
<dbReference type="GO" id="GO:0004519">
    <property type="term" value="F:endonuclease activity"/>
    <property type="evidence" value="ECO:0007669"/>
    <property type="project" value="UniProtKB-KW"/>
</dbReference>
<dbReference type="GO" id="GO:0046872">
    <property type="term" value="F:metal ion binding"/>
    <property type="evidence" value="ECO:0007669"/>
    <property type="project" value="UniProtKB-KW"/>
</dbReference>
<dbReference type="GO" id="GO:0003723">
    <property type="term" value="F:RNA binding"/>
    <property type="evidence" value="ECO:0007669"/>
    <property type="project" value="UniProtKB-KW"/>
</dbReference>
<dbReference type="GO" id="GO:0003964">
    <property type="term" value="F:RNA-directed DNA polymerase activity"/>
    <property type="evidence" value="ECO:0007669"/>
    <property type="project" value="UniProtKB-KW"/>
</dbReference>
<dbReference type="GO" id="GO:0015074">
    <property type="term" value="P:DNA integration"/>
    <property type="evidence" value="ECO:0007669"/>
    <property type="project" value="UniProtKB-KW"/>
</dbReference>
<dbReference type="GO" id="GO:0006310">
    <property type="term" value="P:DNA recombination"/>
    <property type="evidence" value="ECO:0007669"/>
    <property type="project" value="UniProtKB-KW"/>
</dbReference>
<dbReference type="GO" id="GO:0006508">
    <property type="term" value="P:proteolysis"/>
    <property type="evidence" value="ECO:0007669"/>
    <property type="project" value="UniProtKB-KW"/>
</dbReference>
<dbReference type="CDD" id="cd00303">
    <property type="entry name" value="retropepsin_like"/>
    <property type="match status" value="1"/>
</dbReference>
<dbReference type="CDD" id="cd09274">
    <property type="entry name" value="RNase_HI_RT_Ty3"/>
    <property type="match status" value="1"/>
</dbReference>
<dbReference type="CDD" id="cd01647">
    <property type="entry name" value="RT_LTR"/>
    <property type="match status" value="1"/>
</dbReference>
<dbReference type="FunFam" id="3.10.20.370:FF:000003">
    <property type="entry name" value="Transposon Tf2-6 polyprotein"/>
    <property type="match status" value="1"/>
</dbReference>
<dbReference type="FunFam" id="3.30.70.270:FF:000045">
    <property type="entry name" value="Transposon Tf2-7 polyprotein"/>
    <property type="match status" value="1"/>
</dbReference>
<dbReference type="Gene3D" id="1.10.340.70">
    <property type="match status" value="1"/>
</dbReference>
<dbReference type="Gene3D" id="3.10.20.370">
    <property type="match status" value="1"/>
</dbReference>
<dbReference type="Gene3D" id="3.30.70.270">
    <property type="match status" value="2"/>
</dbReference>
<dbReference type="Gene3D" id="2.40.70.10">
    <property type="entry name" value="Acid Proteases"/>
    <property type="match status" value="1"/>
</dbReference>
<dbReference type="Gene3D" id="3.10.10.10">
    <property type="entry name" value="HIV Type 1 Reverse Transcriptase, subunit A, domain 1"/>
    <property type="match status" value="1"/>
</dbReference>
<dbReference type="Gene3D" id="3.30.420.10">
    <property type="entry name" value="Ribonuclease H-like superfamily/Ribonuclease H"/>
    <property type="match status" value="1"/>
</dbReference>
<dbReference type="InterPro" id="IPR001969">
    <property type="entry name" value="Aspartic_peptidase_AS"/>
</dbReference>
<dbReference type="InterPro" id="IPR043502">
    <property type="entry name" value="DNA/RNA_pol_sf"/>
</dbReference>
<dbReference type="InterPro" id="IPR001584">
    <property type="entry name" value="Integrase_cat-core"/>
</dbReference>
<dbReference type="InterPro" id="IPR041588">
    <property type="entry name" value="Integrase_H2C2"/>
</dbReference>
<dbReference type="InterPro" id="IPR021109">
    <property type="entry name" value="Peptidase_aspartic_dom_sf"/>
</dbReference>
<dbReference type="InterPro" id="IPR050951">
    <property type="entry name" value="Retrovirus_Pol_polyprotein"/>
</dbReference>
<dbReference type="InterPro" id="IPR043128">
    <property type="entry name" value="Rev_trsase/Diguanyl_cyclase"/>
</dbReference>
<dbReference type="InterPro" id="IPR012337">
    <property type="entry name" value="RNaseH-like_sf"/>
</dbReference>
<dbReference type="InterPro" id="IPR036397">
    <property type="entry name" value="RNaseH_sf"/>
</dbReference>
<dbReference type="InterPro" id="IPR000477">
    <property type="entry name" value="RT_dom"/>
</dbReference>
<dbReference type="InterPro" id="IPR041577">
    <property type="entry name" value="RT_RNaseH_2"/>
</dbReference>
<dbReference type="InterPro" id="IPR056924">
    <property type="entry name" value="SH3_Tf2-1"/>
</dbReference>
<dbReference type="InterPro" id="IPR056930">
    <property type="entry name" value="Tf2-1-like_C"/>
</dbReference>
<dbReference type="InterPro" id="IPR024648">
    <property type="entry name" value="Tf2-1-like_dom"/>
</dbReference>
<dbReference type="PANTHER" id="PTHR37984">
    <property type="entry name" value="PROTEIN CBG26694"/>
    <property type="match status" value="1"/>
</dbReference>
<dbReference type="PANTHER" id="PTHR37984:SF5">
    <property type="entry name" value="PROTEIN NYNRIN-LIKE"/>
    <property type="match status" value="1"/>
</dbReference>
<dbReference type="Pfam" id="PF17921">
    <property type="entry name" value="Integrase_H2C2"/>
    <property type="match status" value="1"/>
</dbReference>
<dbReference type="Pfam" id="PF12382">
    <property type="entry name" value="Peptidase_A2_2"/>
    <property type="match status" value="1"/>
</dbReference>
<dbReference type="Pfam" id="PF17919">
    <property type="entry name" value="RT_RNaseH_2"/>
    <property type="match status" value="1"/>
</dbReference>
<dbReference type="Pfam" id="PF00665">
    <property type="entry name" value="rve"/>
    <property type="match status" value="1"/>
</dbReference>
<dbReference type="Pfam" id="PF00078">
    <property type="entry name" value="RVT_1"/>
    <property type="match status" value="1"/>
</dbReference>
<dbReference type="Pfam" id="PF24626">
    <property type="entry name" value="SH3_Tf2-1"/>
    <property type="match status" value="1"/>
</dbReference>
<dbReference type="Pfam" id="PF24614">
    <property type="entry name" value="Tf2-1_C"/>
    <property type="match status" value="1"/>
</dbReference>
<dbReference type="SUPFAM" id="SSF50630">
    <property type="entry name" value="Acid proteases"/>
    <property type="match status" value="1"/>
</dbReference>
<dbReference type="SUPFAM" id="SSF56672">
    <property type="entry name" value="DNA/RNA polymerases"/>
    <property type="match status" value="1"/>
</dbReference>
<dbReference type="SUPFAM" id="SSF53098">
    <property type="entry name" value="Ribonuclease H-like"/>
    <property type="match status" value="1"/>
</dbReference>
<dbReference type="PROSITE" id="PS00141">
    <property type="entry name" value="ASP_PROTEASE"/>
    <property type="match status" value="1"/>
</dbReference>
<dbReference type="PROSITE" id="PS50994">
    <property type="entry name" value="INTEGRASE"/>
    <property type="match status" value="1"/>
</dbReference>
<dbReference type="PROSITE" id="PS50878">
    <property type="entry name" value="RT_POL"/>
    <property type="match status" value="1"/>
</dbReference>
<keyword id="KW-0064">Aspartyl protease</keyword>
<keyword id="KW-0229">DNA integration</keyword>
<keyword id="KW-0233">DNA recombination</keyword>
<keyword id="KW-0238">DNA-binding</keyword>
<keyword id="KW-0239">DNA-directed DNA polymerase</keyword>
<keyword id="KW-0255">Endonuclease</keyword>
<keyword id="KW-0378">Hydrolase</keyword>
<keyword id="KW-0460">Magnesium</keyword>
<keyword id="KW-0479">Metal-binding</keyword>
<keyword id="KW-0511">Multifunctional enzyme</keyword>
<keyword id="KW-0540">Nuclease</keyword>
<keyword id="KW-0548">Nucleotidyltransferase</keyword>
<keyword id="KW-0645">Protease</keyword>
<keyword id="KW-1185">Reference proteome</keyword>
<keyword id="KW-0694">RNA-binding</keyword>
<keyword id="KW-0695">RNA-directed DNA polymerase</keyword>
<keyword id="KW-0808">Transferase</keyword>
<keyword id="KW-0814">Transposable element</keyword>
<proteinExistence type="inferred from homology"/>
<organism>
    <name type="scientific">Schizosaccharomyces pombe (strain 972 / ATCC 24843)</name>
    <name type="common">Fission yeast</name>
    <dbReference type="NCBI Taxonomy" id="284812"/>
    <lineage>
        <taxon>Eukaryota</taxon>
        <taxon>Fungi</taxon>
        <taxon>Dikarya</taxon>
        <taxon>Ascomycota</taxon>
        <taxon>Taphrinomycotina</taxon>
        <taxon>Schizosaccharomycetes</taxon>
        <taxon>Schizosaccharomycetales</taxon>
        <taxon>Schizosaccharomycetaceae</taxon>
        <taxon>Schizosaccharomyces</taxon>
    </lineage>
</organism>